<keyword id="KW-0256">Endoplasmic reticulum</keyword>
<keyword id="KW-0325">Glycoprotein</keyword>
<keyword id="KW-0444">Lipid biosynthesis</keyword>
<keyword id="KW-0443">Lipid metabolism</keyword>
<keyword id="KW-0472">Membrane</keyword>
<keyword id="KW-0597">Phosphoprotein</keyword>
<keyword id="KW-1185">Reference proteome</keyword>
<keyword id="KW-0808">Transferase</keyword>
<keyword id="KW-0812">Transmembrane</keyword>
<keyword id="KW-1133">Transmembrane helix</keyword>
<dbReference type="EC" id="2.3.1.24"/>
<dbReference type="EMBL" id="U76608">
    <property type="protein sequence ID" value="AAB19113.1"/>
    <property type="molecule type" value="Genomic_DNA"/>
</dbReference>
<dbReference type="EMBL" id="CU329670">
    <property type="protein sequence ID" value="CAB16359.1"/>
    <property type="molecule type" value="Genomic_DNA"/>
</dbReference>
<dbReference type="PIR" id="T38012">
    <property type="entry name" value="T38012"/>
</dbReference>
<dbReference type="RefSeq" id="NP_593201.1">
    <property type="nucleotide sequence ID" value="NM_001018597.2"/>
</dbReference>
<dbReference type="SMR" id="P78970"/>
<dbReference type="BioGRID" id="278925">
    <property type="interactions" value="38"/>
</dbReference>
<dbReference type="FunCoup" id="P78970">
    <property type="interactions" value="252"/>
</dbReference>
<dbReference type="STRING" id="284812.P78970"/>
<dbReference type="GlyCosmos" id="P78970">
    <property type="glycosylation" value="1 site, No reported glycans"/>
</dbReference>
<dbReference type="iPTMnet" id="P78970"/>
<dbReference type="PaxDb" id="4896-SPAC1A6.09c.1"/>
<dbReference type="EnsemblFungi" id="SPAC1A6.09c.1">
    <property type="protein sequence ID" value="SPAC1A6.09c.1:pep"/>
    <property type="gene ID" value="SPAC1A6.09c"/>
</dbReference>
<dbReference type="PomBase" id="SPAC1A6.09c">
    <property type="gene designation" value="lag1"/>
</dbReference>
<dbReference type="VEuPathDB" id="FungiDB:SPAC1A6.09c"/>
<dbReference type="eggNOG" id="KOG1607">
    <property type="taxonomic scope" value="Eukaryota"/>
</dbReference>
<dbReference type="HOGENOM" id="CLU_028277_2_0_1"/>
<dbReference type="InParanoid" id="P78970"/>
<dbReference type="OMA" id="KLYCLLQ"/>
<dbReference type="PhylomeDB" id="P78970"/>
<dbReference type="Reactome" id="R-SPO-1660661">
    <property type="pathway name" value="Sphingolipid de novo biosynthesis"/>
</dbReference>
<dbReference type="PRO" id="PR:P78970"/>
<dbReference type="Proteomes" id="UP000002485">
    <property type="component" value="Chromosome I"/>
</dbReference>
<dbReference type="GO" id="GO:0005783">
    <property type="term" value="C:endoplasmic reticulum"/>
    <property type="evidence" value="ECO:0000269"/>
    <property type="project" value="PomBase"/>
</dbReference>
<dbReference type="GO" id="GO:0005789">
    <property type="term" value="C:endoplasmic reticulum membrane"/>
    <property type="evidence" value="ECO:0000303"/>
    <property type="project" value="PomBase"/>
</dbReference>
<dbReference type="GO" id="GO:0050291">
    <property type="term" value="F:sphingosine N-acyltransferase activity"/>
    <property type="evidence" value="ECO:0000318"/>
    <property type="project" value="GO_Central"/>
</dbReference>
<dbReference type="GO" id="GO:0046513">
    <property type="term" value="P:ceramide biosynthetic process"/>
    <property type="evidence" value="ECO:0000269"/>
    <property type="project" value="PomBase"/>
</dbReference>
<dbReference type="InterPro" id="IPR016439">
    <property type="entry name" value="Lag1/Lac1-like"/>
</dbReference>
<dbReference type="InterPro" id="IPR006634">
    <property type="entry name" value="TLC-dom"/>
</dbReference>
<dbReference type="PANTHER" id="PTHR12560:SF0">
    <property type="entry name" value="LD18904P"/>
    <property type="match status" value="1"/>
</dbReference>
<dbReference type="PANTHER" id="PTHR12560">
    <property type="entry name" value="LONGEVITY ASSURANCE FACTOR 1 LAG1"/>
    <property type="match status" value="1"/>
</dbReference>
<dbReference type="Pfam" id="PF03798">
    <property type="entry name" value="TRAM_LAG1_CLN8"/>
    <property type="match status" value="1"/>
</dbReference>
<dbReference type="PIRSF" id="PIRSF005225">
    <property type="entry name" value="LAG1_LAC1"/>
    <property type="match status" value="1"/>
</dbReference>
<dbReference type="SMART" id="SM00724">
    <property type="entry name" value="TLC"/>
    <property type="match status" value="1"/>
</dbReference>
<dbReference type="PROSITE" id="PS50922">
    <property type="entry name" value="TLC"/>
    <property type="match status" value="1"/>
</dbReference>
<gene>
    <name type="primary">lag1</name>
    <name type="ORF">SPAC1A6.09c</name>
</gene>
<accession>P78970</accession>
<accession>O13860</accession>
<sequence>MSNRKADEKHHMSSSSLTNDRSYIRNLSNRKTSISRKVPITRTLEDPSNFVAKDGTKLVQAPLFLLVWQKEICLSIIAICFACLLSPSLRPYAEPFIFLSYKQPDGSYGKGPKDACFPIFWVIVFTAFRVIVMDYVFRPFVLNWGVRNRKVIIRFCEQGYSFFYYLCFWFLGLYIYRSSNYWSNEEKLFEDYPQYYMSPLFKAYYLIQLGFWLQQILVLHLEQRRADHWQMFAHHIVTCALIILSYGFNFLRVGNAILYIFDLSDYILSGGKMLKYLGFGKICDYLFGIFVASWVYSRHYLFSKILRVVVTNAPEIIGGFHLDVPNGYIFNKPIYIAFIILLFTLQLLIYIWFGMIVKVAYRVFSGEEATDSRSDDEGEDEEASSTNEDK</sequence>
<organism>
    <name type="scientific">Schizosaccharomyces pombe (strain 972 / ATCC 24843)</name>
    <name type="common">Fission yeast</name>
    <dbReference type="NCBI Taxonomy" id="284812"/>
    <lineage>
        <taxon>Eukaryota</taxon>
        <taxon>Fungi</taxon>
        <taxon>Dikarya</taxon>
        <taxon>Ascomycota</taxon>
        <taxon>Taphrinomycotina</taxon>
        <taxon>Schizosaccharomycetes</taxon>
        <taxon>Schizosaccharomycetales</taxon>
        <taxon>Schizosaccharomycetaceae</taxon>
        <taxon>Schizosaccharomyces</taxon>
    </lineage>
</organism>
<protein>
    <recommendedName>
        <fullName>Sphingosine N-acyltransferase lag1</fullName>
        <ecNumber>2.3.1.24</ecNumber>
    </recommendedName>
    <alternativeName>
        <fullName>Longevity assurance factor 1</fullName>
    </alternativeName>
    <alternativeName>
        <fullName>Longevity assurance protein 1</fullName>
    </alternativeName>
</protein>
<reference key="1">
    <citation type="submission" date="1996-11" db="EMBL/GenBank/DDBJ databases">
        <authorList>
            <person name="Chanda E.R."/>
            <person name="Lingner C."/>
            <person name="Ko Z."/>
            <person name="Young P.G."/>
        </authorList>
    </citation>
    <scope>NUCLEOTIDE SEQUENCE [GENOMIC DNA]</scope>
</reference>
<reference key="2">
    <citation type="journal article" date="2002" name="Nature">
        <title>The genome sequence of Schizosaccharomyces pombe.</title>
        <authorList>
            <person name="Wood V."/>
            <person name="Gwilliam R."/>
            <person name="Rajandream M.A."/>
            <person name="Lyne M.H."/>
            <person name="Lyne R."/>
            <person name="Stewart A."/>
            <person name="Sgouros J.G."/>
            <person name="Peat N."/>
            <person name="Hayles J."/>
            <person name="Baker S.G."/>
            <person name="Basham D."/>
            <person name="Bowman S."/>
            <person name="Brooks K."/>
            <person name="Brown D."/>
            <person name="Brown S."/>
            <person name="Chillingworth T."/>
            <person name="Churcher C.M."/>
            <person name="Collins M."/>
            <person name="Connor R."/>
            <person name="Cronin A."/>
            <person name="Davis P."/>
            <person name="Feltwell T."/>
            <person name="Fraser A."/>
            <person name="Gentles S."/>
            <person name="Goble A."/>
            <person name="Hamlin N."/>
            <person name="Harris D.E."/>
            <person name="Hidalgo J."/>
            <person name="Hodgson G."/>
            <person name="Holroyd S."/>
            <person name="Hornsby T."/>
            <person name="Howarth S."/>
            <person name="Huckle E.J."/>
            <person name="Hunt S."/>
            <person name="Jagels K."/>
            <person name="James K.D."/>
            <person name="Jones L."/>
            <person name="Jones M."/>
            <person name="Leather S."/>
            <person name="McDonald S."/>
            <person name="McLean J."/>
            <person name="Mooney P."/>
            <person name="Moule S."/>
            <person name="Mungall K.L."/>
            <person name="Murphy L.D."/>
            <person name="Niblett D."/>
            <person name="Odell C."/>
            <person name="Oliver K."/>
            <person name="O'Neil S."/>
            <person name="Pearson D."/>
            <person name="Quail M.A."/>
            <person name="Rabbinowitsch E."/>
            <person name="Rutherford K.M."/>
            <person name="Rutter S."/>
            <person name="Saunders D."/>
            <person name="Seeger K."/>
            <person name="Sharp S."/>
            <person name="Skelton J."/>
            <person name="Simmonds M.N."/>
            <person name="Squares R."/>
            <person name="Squares S."/>
            <person name="Stevens K."/>
            <person name="Taylor K."/>
            <person name="Taylor R.G."/>
            <person name="Tivey A."/>
            <person name="Walsh S.V."/>
            <person name="Warren T."/>
            <person name="Whitehead S."/>
            <person name="Woodward J.R."/>
            <person name="Volckaert G."/>
            <person name="Aert R."/>
            <person name="Robben J."/>
            <person name="Grymonprez B."/>
            <person name="Weltjens I."/>
            <person name="Vanstreels E."/>
            <person name="Rieger M."/>
            <person name="Schaefer M."/>
            <person name="Mueller-Auer S."/>
            <person name="Gabel C."/>
            <person name="Fuchs M."/>
            <person name="Duesterhoeft A."/>
            <person name="Fritzc C."/>
            <person name="Holzer E."/>
            <person name="Moestl D."/>
            <person name="Hilbert H."/>
            <person name="Borzym K."/>
            <person name="Langer I."/>
            <person name="Beck A."/>
            <person name="Lehrach H."/>
            <person name="Reinhardt R."/>
            <person name="Pohl T.M."/>
            <person name="Eger P."/>
            <person name="Zimmermann W."/>
            <person name="Wedler H."/>
            <person name="Wambutt R."/>
            <person name="Purnelle B."/>
            <person name="Goffeau A."/>
            <person name="Cadieu E."/>
            <person name="Dreano S."/>
            <person name="Gloux S."/>
            <person name="Lelaure V."/>
            <person name="Mottier S."/>
            <person name="Galibert F."/>
            <person name="Aves S.J."/>
            <person name="Xiang Z."/>
            <person name="Hunt C."/>
            <person name="Moore K."/>
            <person name="Hurst S.M."/>
            <person name="Lucas M."/>
            <person name="Rochet M."/>
            <person name="Gaillardin C."/>
            <person name="Tallada V.A."/>
            <person name="Garzon A."/>
            <person name="Thode G."/>
            <person name="Daga R.R."/>
            <person name="Cruzado L."/>
            <person name="Jimenez J."/>
            <person name="Sanchez M."/>
            <person name="del Rey F."/>
            <person name="Benito J."/>
            <person name="Dominguez A."/>
            <person name="Revuelta J.L."/>
            <person name="Moreno S."/>
            <person name="Armstrong J."/>
            <person name="Forsburg S.L."/>
            <person name="Cerutti L."/>
            <person name="Lowe T."/>
            <person name="McCombie W.R."/>
            <person name="Paulsen I."/>
            <person name="Potashkin J."/>
            <person name="Shpakovski G.V."/>
            <person name="Ussery D."/>
            <person name="Barrell B.G."/>
            <person name="Nurse P."/>
        </authorList>
    </citation>
    <scope>NUCLEOTIDE SEQUENCE [LARGE SCALE GENOMIC DNA]</scope>
    <source>
        <strain>972 / ATCC 24843</strain>
    </source>
</reference>
<reference key="3">
    <citation type="journal article" date="2008" name="J. Proteome Res.">
        <title>Phosphoproteome analysis of fission yeast.</title>
        <authorList>
            <person name="Wilson-Grady J.T."/>
            <person name="Villen J."/>
            <person name="Gygi S.P."/>
        </authorList>
    </citation>
    <scope>PHOSPHORYLATION [LARGE SCALE ANALYSIS] AT SER-372 AND SER-374</scope>
    <scope>IDENTIFICATION BY MASS SPECTROMETRY</scope>
</reference>
<comment type="function">
    <text evidence="1">Component of the ceramide synthase complex required for C26-CoA-dependent ceramide synthesis. Facilitates ER-to-Golgi transport of GPI-anchored proteins (By similarity). Involved in the aging process (By similarity).</text>
</comment>
<comment type="catalytic activity">
    <reaction>
        <text>a fatty acyl-CoA + sphing-4-enine = an N-acylsphing-4-enine + CoA + H(+)</text>
        <dbReference type="Rhea" id="RHEA:23768"/>
        <dbReference type="ChEBI" id="CHEBI:15378"/>
        <dbReference type="ChEBI" id="CHEBI:52639"/>
        <dbReference type="ChEBI" id="CHEBI:57287"/>
        <dbReference type="ChEBI" id="CHEBI:57756"/>
        <dbReference type="ChEBI" id="CHEBI:77636"/>
        <dbReference type="EC" id="2.3.1.24"/>
    </reaction>
</comment>
<comment type="subcellular location">
    <subcellularLocation>
        <location evidence="1">Endoplasmic reticulum membrane</location>
        <topology evidence="1">Multi-pass membrane protein</topology>
    </subcellularLocation>
</comment>
<comment type="similarity">
    <text evidence="6">Belongs to the sphingosine N-acyltransferase family.</text>
</comment>
<evidence type="ECO:0000250" key="1"/>
<evidence type="ECO:0000255" key="2"/>
<evidence type="ECO:0000255" key="3">
    <source>
        <dbReference type="PROSITE-ProRule" id="PRU00205"/>
    </source>
</evidence>
<evidence type="ECO:0000256" key="4">
    <source>
        <dbReference type="SAM" id="MobiDB-lite"/>
    </source>
</evidence>
<evidence type="ECO:0000269" key="5">
    <source>
    </source>
</evidence>
<evidence type="ECO:0000305" key="6"/>
<proteinExistence type="evidence at protein level"/>
<feature type="chain" id="PRO_0000185526" description="Sphingosine N-acyltransferase lag1">
    <location>
        <begin position="1"/>
        <end position="390"/>
    </location>
</feature>
<feature type="transmembrane region" description="Helical" evidence="2">
    <location>
        <begin position="63"/>
        <end position="83"/>
    </location>
</feature>
<feature type="transmembrane region" description="Helical" evidence="2">
    <location>
        <begin position="117"/>
        <end position="137"/>
    </location>
</feature>
<feature type="transmembrane region" description="Helical" evidence="2">
    <location>
        <begin position="155"/>
        <end position="175"/>
    </location>
</feature>
<feature type="transmembrane region" description="Helical" evidence="2">
    <location>
        <begin position="199"/>
        <end position="219"/>
    </location>
</feature>
<feature type="transmembrane region" description="Helical" evidence="2">
    <location>
        <begin position="231"/>
        <end position="251"/>
    </location>
</feature>
<feature type="transmembrane region" description="Helical" evidence="2">
    <location>
        <begin position="276"/>
        <end position="296"/>
    </location>
</feature>
<feature type="transmembrane region" description="Helical" evidence="2">
    <location>
        <begin position="336"/>
        <end position="356"/>
    </location>
</feature>
<feature type="domain" description="TLC" evidence="3">
    <location>
        <begin position="153"/>
        <end position="365"/>
    </location>
</feature>
<feature type="region of interest" description="Disordered" evidence="4">
    <location>
        <begin position="367"/>
        <end position="390"/>
    </location>
</feature>
<feature type="modified residue" description="Phosphoserine" evidence="5">
    <location>
        <position position="372"/>
    </location>
</feature>
<feature type="modified residue" description="Phosphoserine" evidence="5">
    <location>
        <position position="374"/>
    </location>
</feature>
<feature type="glycosylation site" description="N-linked (GlcNAc...) asparagine" evidence="2">
    <location>
        <position position="26"/>
    </location>
</feature>
<feature type="sequence conflict" description="In Ref. 1; AAB19113." evidence="6" ref="1">
    <original>EDEEASSTNEDK</original>
    <variation>GRRGGEFNE</variation>
    <location>
        <begin position="379"/>
        <end position="390"/>
    </location>
</feature>
<name>LAG1_SCHPO</name>